<dbReference type="EMBL" id="CP000949">
    <property type="protein sequence ID" value="ACA71885.1"/>
    <property type="molecule type" value="Genomic_DNA"/>
</dbReference>
<dbReference type="SMR" id="B1J5H2"/>
<dbReference type="STRING" id="390235.PputW619_1380"/>
<dbReference type="KEGG" id="ppw:PputW619_1380"/>
<dbReference type="eggNOG" id="COG0776">
    <property type="taxonomic scope" value="Bacteria"/>
</dbReference>
<dbReference type="HOGENOM" id="CLU_105066_2_0_6"/>
<dbReference type="OrthoDB" id="9804203at2"/>
<dbReference type="GO" id="GO:0005694">
    <property type="term" value="C:chromosome"/>
    <property type="evidence" value="ECO:0007669"/>
    <property type="project" value="InterPro"/>
</dbReference>
<dbReference type="GO" id="GO:0005829">
    <property type="term" value="C:cytosol"/>
    <property type="evidence" value="ECO:0007669"/>
    <property type="project" value="TreeGrafter"/>
</dbReference>
<dbReference type="GO" id="GO:0003677">
    <property type="term" value="F:DNA binding"/>
    <property type="evidence" value="ECO:0007669"/>
    <property type="project" value="UniProtKB-UniRule"/>
</dbReference>
<dbReference type="GO" id="GO:0030527">
    <property type="term" value="F:structural constituent of chromatin"/>
    <property type="evidence" value="ECO:0007669"/>
    <property type="project" value="InterPro"/>
</dbReference>
<dbReference type="GO" id="GO:0006310">
    <property type="term" value="P:DNA recombination"/>
    <property type="evidence" value="ECO:0007669"/>
    <property type="project" value="UniProtKB-UniRule"/>
</dbReference>
<dbReference type="GO" id="GO:0006355">
    <property type="term" value="P:regulation of DNA-templated transcription"/>
    <property type="evidence" value="ECO:0007669"/>
    <property type="project" value="UniProtKB-UniRule"/>
</dbReference>
<dbReference type="GO" id="GO:0006417">
    <property type="term" value="P:regulation of translation"/>
    <property type="evidence" value="ECO:0007669"/>
    <property type="project" value="UniProtKB-UniRule"/>
</dbReference>
<dbReference type="CDD" id="cd13836">
    <property type="entry name" value="IHF_B"/>
    <property type="match status" value="1"/>
</dbReference>
<dbReference type="FunFam" id="4.10.520.10:FF:000003">
    <property type="entry name" value="Integration host factor subunit beta"/>
    <property type="match status" value="1"/>
</dbReference>
<dbReference type="Gene3D" id="4.10.520.10">
    <property type="entry name" value="IHF-like DNA-binding proteins"/>
    <property type="match status" value="1"/>
</dbReference>
<dbReference type="HAMAP" id="MF_00381">
    <property type="entry name" value="IHF_beta"/>
    <property type="match status" value="1"/>
</dbReference>
<dbReference type="InterPro" id="IPR000119">
    <property type="entry name" value="Hist_DNA-bd"/>
</dbReference>
<dbReference type="InterPro" id="IPR020816">
    <property type="entry name" value="Histone-like_DNA-bd_CS"/>
</dbReference>
<dbReference type="InterPro" id="IPR010992">
    <property type="entry name" value="IHF-like_DNA-bd_dom_sf"/>
</dbReference>
<dbReference type="InterPro" id="IPR005685">
    <property type="entry name" value="IHF_beta"/>
</dbReference>
<dbReference type="NCBIfam" id="TIGR00988">
    <property type="entry name" value="hip"/>
    <property type="match status" value="1"/>
</dbReference>
<dbReference type="NCBIfam" id="NF001222">
    <property type="entry name" value="PRK00199.1"/>
    <property type="match status" value="1"/>
</dbReference>
<dbReference type="PANTHER" id="PTHR33175">
    <property type="entry name" value="DNA-BINDING PROTEIN HU"/>
    <property type="match status" value="1"/>
</dbReference>
<dbReference type="PANTHER" id="PTHR33175:SF5">
    <property type="entry name" value="INTEGRATION HOST FACTOR SUBUNIT BETA"/>
    <property type="match status" value="1"/>
</dbReference>
<dbReference type="Pfam" id="PF00216">
    <property type="entry name" value="Bac_DNA_binding"/>
    <property type="match status" value="1"/>
</dbReference>
<dbReference type="PRINTS" id="PR01727">
    <property type="entry name" value="DNABINDINGHU"/>
</dbReference>
<dbReference type="SMART" id="SM00411">
    <property type="entry name" value="BHL"/>
    <property type="match status" value="1"/>
</dbReference>
<dbReference type="SUPFAM" id="SSF47729">
    <property type="entry name" value="IHF-like DNA-binding proteins"/>
    <property type="match status" value="1"/>
</dbReference>
<dbReference type="PROSITE" id="PS00045">
    <property type="entry name" value="HISTONE_LIKE"/>
    <property type="match status" value="1"/>
</dbReference>
<proteinExistence type="inferred from homology"/>
<evidence type="ECO:0000255" key="1">
    <source>
        <dbReference type="HAMAP-Rule" id="MF_00381"/>
    </source>
</evidence>
<protein>
    <recommendedName>
        <fullName evidence="1">Integration host factor subunit beta</fullName>
        <shortName evidence="1">IHF-beta</shortName>
    </recommendedName>
</protein>
<name>IHFB_PSEPW</name>
<accession>B1J5H2</accession>
<feature type="chain" id="PRO_1000122227" description="Integration host factor subunit beta">
    <location>
        <begin position="1"/>
        <end position="98"/>
    </location>
</feature>
<gene>
    <name evidence="1" type="primary">ihfB</name>
    <name evidence="1" type="synonym">himD</name>
    <name type="ordered locus">PputW619_1380</name>
</gene>
<keyword id="KW-0233">DNA recombination</keyword>
<keyword id="KW-0238">DNA-binding</keyword>
<keyword id="KW-0804">Transcription</keyword>
<keyword id="KW-0805">Transcription regulation</keyword>
<keyword id="KW-0810">Translation regulation</keyword>
<comment type="function">
    <text evidence="1">This protein is one of the two subunits of integration host factor, a specific DNA-binding protein that functions in genetic recombination as well as in transcriptional and translational control.</text>
</comment>
<comment type="subunit">
    <text evidence="1">Heterodimer of an alpha and a beta chain.</text>
</comment>
<comment type="similarity">
    <text evidence="1">Belongs to the bacterial histone-like protein family.</text>
</comment>
<reference key="1">
    <citation type="submission" date="2008-02" db="EMBL/GenBank/DDBJ databases">
        <title>Complete sequence of Pseudomonas putida W619.</title>
        <authorList>
            <person name="Copeland A."/>
            <person name="Lucas S."/>
            <person name="Lapidus A."/>
            <person name="Barry K."/>
            <person name="Detter J.C."/>
            <person name="Glavina del Rio T."/>
            <person name="Dalin E."/>
            <person name="Tice H."/>
            <person name="Pitluck S."/>
            <person name="Chain P."/>
            <person name="Malfatti S."/>
            <person name="Shin M."/>
            <person name="Vergez L."/>
            <person name="Schmutz J."/>
            <person name="Larimer F."/>
            <person name="Land M."/>
            <person name="Hauser L."/>
            <person name="Kyrpides N."/>
            <person name="Kim E."/>
            <person name="Taghavi S."/>
            <person name="Vangronsveld D."/>
            <person name="van der Lelie D."/>
            <person name="Richardson P."/>
        </authorList>
    </citation>
    <scope>NUCLEOTIDE SEQUENCE [LARGE SCALE GENOMIC DNA]</scope>
    <source>
        <strain>W619</strain>
    </source>
</reference>
<organism>
    <name type="scientific">Pseudomonas putida (strain W619)</name>
    <dbReference type="NCBI Taxonomy" id="390235"/>
    <lineage>
        <taxon>Bacteria</taxon>
        <taxon>Pseudomonadati</taxon>
        <taxon>Pseudomonadota</taxon>
        <taxon>Gammaproteobacteria</taxon>
        <taxon>Pseudomonadales</taxon>
        <taxon>Pseudomonadaceae</taxon>
        <taxon>Pseudomonas</taxon>
    </lineage>
</organism>
<sequence length="98" mass="11184">MTKSELIERIVTHQGLLSSKDVELAIKTMLEQMSQCLATGDRIEIRGFGSFSLHYRAPRVGRNPKTGQSVELEGKFVPHFKPGKELRDRVNEEEHEHP</sequence>